<organism>
    <name type="scientific">Bacillus cereus (strain Q1)</name>
    <dbReference type="NCBI Taxonomy" id="361100"/>
    <lineage>
        <taxon>Bacteria</taxon>
        <taxon>Bacillati</taxon>
        <taxon>Bacillota</taxon>
        <taxon>Bacilli</taxon>
        <taxon>Bacillales</taxon>
        <taxon>Bacillaceae</taxon>
        <taxon>Bacillus</taxon>
        <taxon>Bacillus cereus group</taxon>
    </lineage>
</organism>
<protein>
    <recommendedName>
        <fullName evidence="1">Adenylate kinase</fullName>
        <shortName evidence="1">AK</shortName>
        <ecNumber evidence="1">2.7.4.3</ecNumber>
    </recommendedName>
    <alternativeName>
        <fullName evidence="1">ATP-AMP transphosphorylase</fullName>
    </alternativeName>
    <alternativeName>
        <fullName evidence="1">ATP:AMP phosphotransferase</fullName>
    </alternativeName>
    <alternativeName>
        <fullName evidence="1">Adenylate monophosphate kinase</fullName>
    </alternativeName>
</protein>
<gene>
    <name evidence="1" type="primary">adk</name>
    <name type="ordered locus">BCQ_0144</name>
</gene>
<accession>B9IZL5</accession>
<dbReference type="EC" id="2.7.4.3" evidence="1"/>
<dbReference type="EMBL" id="CP000227">
    <property type="protein sequence ID" value="ACM10659.1"/>
    <property type="molecule type" value="Genomic_DNA"/>
</dbReference>
<dbReference type="SMR" id="B9IZL5"/>
<dbReference type="KEGG" id="bcq:BCQ_0144"/>
<dbReference type="HOGENOM" id="CLU_032354_1_2_9"/>
<dbReference type="UniPathway" id="UPA00588">
    <property type="reaction ID" value="UER00649"/>
</dbReference>
<dbReference type="Proteomes" id="UP000000441">
    <property type="component" value="Chromosome"/>
</dbReference>
<dbReference type="GO" id="GO:0005737">
    <property type="term" value="C:cytoplasm"/>
    <property type="evidence" value="ECO:0007669"/>
    <property type="project" value="UniProtKB-SubCell"/>
</dbReference>
<dbReference type="GO" id="GO:0004017">
    <property type="term" value="F:adenylate kinase activity"/>
    <property type="evidence" value="ECO:0007669"/>
    <property type="project" value="UniProtKB-UniRule"/>
</dbReference>
<dbReference type="GO" id="GO:0005524">
    <property type="term" value="F:ATP binding"/>
    <property type="evidence" value="ECO:0007669"/>
    <property type="project" value="UniProtKB-UniRule"/>
</dbReference>
<dbReference type="GO" id="GO:0008270">
    <property type="term" value="F:zinc ion binding"/>
    <property type="evidence" value="ECO:0007669"/>
    <property type="project" value="UniProtKB-UniRule"/>
</dbReference>
<dbReference type="GO" id="GO:0044209">
    <property type="term" value="P:AMP salvage"/>
    <property type="evidence" value="ECO:0007669"/>
    <property type="project" value="UniProtKB-UniRule"/>
</dbReference>
<dbReference type="CDD" id="cd01428">
    <property type="entry name" value="ADK"/>
    <property type="match status" value="1"/>
</dbReference>
<dbReference type="FunFam" id="3.40.50.300:FF:000106">
    <property type="entry name" value="Adenylate kinase mitochondrial"/>
    <property type="match status" value="1"/>
</dbReference>
<dbReference type="Gene3D" id="3.40.50.300">
    <property type="entry name" value="P-loop containing nucleotide triphosphate hydrolases"/>
    <property type="match status" value="1"/>
</dbReference>
<dbReference type="HAMAP" id="MF_00235">
    <property type="entry name" value="Adenylate_kinase_Adk"/>
    <property type="match status" value="1"/>
</dbReference>
<dbReference type="InterPro" id="IPR006259">
    <property type="entry name" value="Adenyl_kin_sub"/>
</dbReference>
<dbReference type="InterPro" id="IPR000850">
    <property type="entry name" value="Adenylat/UMP-CMP_kin"/>
</dbReference>
<dbReference type="InterPro" id="IPR033690">
    <property type="entry name" value="Adenylat_kinase_CS"/>
</dbReference>
<dbReference type="InterPro" id="IPR007862">
    <property type="entry name" value="Adenylate_kinase_lid-dom"/>
</dbReference>
<dbReference type="InterPro" id="IPR027417">
    <property type="entry name" value="P-loop_NTPase"/>
</dbReference>
<dbReference type="NCBIfam" id="TIGR01351">
    <property type="entry name" value="adk"/>
    <property type="match status" value="1"/>
</dbReference>
<dbReference type="NCBIfam" id="NF001380">
    <property type="entry name" value="PRK00279.1-2"/>
    <property type="match status" value="1"/>
</dbReference>
<dbReference type="NCBIfam" id="NF001381">
    <property type="entry name" value="PRK00279.1-3"/>
    <property type="match status" value="1"/>
</dbReference>
<dbReference type="NCBIfam" id="NF011100">
    <property type="entry name" value="PRK14527.1"/>
    <property type="match status" value="1"/>
</dbReference>
<dbReference type="PANTHER" id="PTHR23359">
    <property type="entry name" value="NUCLEOTIDE KINASE"/>
    <property type="match status" value="1"/>
</dbReference>
<dbReference type="Pfam" id="PF00406">
    <property type="entry name" value="ADK"/>
    <property type="match status" value="1"/>
</dbReference>
<dbReference type="Pfam" id="PF05191">
    <property type="entry name" value="ADK_lid"/>
    <property type="match status" value="1"/>
</dbReference>
<dbReference type="PRINTS" id="PR00094">
    <property type="entry name" value="ADENYLTKNASE"/>
</dbReference>
<dbReference type="SUPFAM" id="SSF52540">
    <property type="entry name" value="P-loop containing nucleoside triphosphate hydrolases"/>
    <property type="match status" value="1"/>
</dbReference>
<dbReference type="PROSITE" id="PS00113">
    <property type="entry name" value="ADENYLATE_KINASE"/>
    <property type="match status" value="1"/>
</dbReference>
<feature type="chain" id="PRO_1000191123" description="Adenylate kinase">
    <location>
        <begin position="1"/>
        <end position="216"/>
    </location>
</feature>
<feature type="region of interest" description="NMP" evidence="1">
    <location>
        <begin position="30"/>
        <end position="59"/>
    </location>
</feature>
<feature type="region of interest" description="LID" evidence="1">
    <location>
        <begin position="126"/>
        <end position="163"/>
    </location>
</feature>
<feature type="binding site" evidence="1">
    <location>
        <begin position="10"/>
        <end position="15"/>
    </location>
    <ligand>
        <name>ATP</name>
        <dbReference type="ChEBI" id="CHEBI:30616"/>
    </ligand>
</feature>
<feature type="binding site" evidence="1">
    <location>
        <position position="31"/>
    </location>
    <ligand>
        <name>AMP</name>
        <dbReference type="ChEBI" id="CHEBI:456215"/>
    </ligand>
</feature>
<feature type="binding site" evidence="1">
    <location>
        <position position="36"/>
    </location>
    <ligand>
        <name>AMP</name>
        <dbReference type="ChEBI" id="CHEBI:456215"/>
    </ligand>
</feature>
<feature type="binding site" evidence="1">
    <location>
        <begin position="57"/>
        <end position="59"/>
    </location>
    <ligand>
        <name>AMP</name>
        <dbReference type="ChEBI" id="CHEBI:456215"/>
    </ligand>
</feature>
<feature type="binding site" evidence="1">
    <location>
        <begin position="85"/>
        <end position="88"/>
    </location>
    <ligand>
        <name>AMP</name>
        <dbReference type="ChEBI" id="CHEBI:456215"/>
    </ligand>
</feature>
<feature type="binding site" evidence="1">
    <location>
        <position position="92"/>
    </location>
    <ligand>
        <name>AMP</name>
        <dbReference type="ChEBI" id="CHEBI:456215"/>
    </ligand>
</feature>
<feature type="binding site" evidence="1">
    <location>
        <position position="127"/>
    </location>
    <ligand>
        <name>ATP</name>
        <dbReference type="ChEBI" id="CHEBI:30616"/>
    </ligand>
</feature>
<feature type="binding site" evidence="1">
    <location>
        <position position="130"/>
    </location>
    <ligand>
        <name>Zn(2+)</name>
        <dbReference type="ChEBI" id="CHEBI:29105"/>
        <note>structural</note>
    </ligand>
</feature>
<feature type="binding site" evidence="1">
    <location>
        <position position="133"/>
    </location>
    <ligand>
        <name>Zn(2+)</name>
        <dbReference type="ChEBI" id="CHEBI:29105"/>
        <note>structural</note>
    </ligand>
</feature>
<feature type="binding site" evidence="1">
    <location>
        <begin position="136"/>
        <end position="137"/>
    </location>
    <ligand>
        <name>ATP</name>
        <dbReference type="ChEBI" id="CHEBI:30616"/>
    </ligand>
</feature>
<feature type="binding site" evidence="1">
    <location>
        <position position="150"/>
    </location>
    <ligand>
        <name>Zn(2+)</name>
        <dbReference type="ChEBI" id="CHEBI:29105"/>
        <note>structural</note>
    </ligand>
</feature>
<feature type="binding site" evidence="1">
    <location>
        <position position="153"/>
    </location>
    <ligand>
        <name>Zn(2+)</name>
        <dbReference type="ChEBI" id="CHEBI:29105"/>
        <note>structural</note>
    </ligand>
</feature>
<feature type="binding site" evidence="1">
    <location>
        <position position="160"/>
    </location>
    <ligand>
        <name>AMP</name>
        <dbReference type="ChEBI" id="CHEBI:456215"/>
    </ligand>
</feature>
<feature type="binding site" evidence="1">
    <location>
        <position position="171"/>
    </location>
    <ligand>
        <name>AMP</name>
        <dbReference type="ChEBI" id="CHEBI:456215"/>
    </ligand>
</feature>
<feature type="binding site" evidence="1">
    <location>
        <position position="199"/>
    </location>
    <ligand>
        <name>ATP</name>
        <dbReference type="ChEBI" id="CHEBI:30616"/>
    </ligand>
</feature>
<name>KAD_BACCQ</name>
<comment type="function">
    <text evidence="1">Catalyzes the reversible transfer of the terminal phosphate group between ATP and AMP. Plays an important role in cellular energy homeostasis and in adenine nucleotide metabolism.</text>
</comment>
<comment type="catalytic activity">
    <reaction evidence="1">
        <text>AMP + ATP = 2 ADP</text>
        <dbReference type="Rhea" id="RHEA:12973"/>
        <dbReference type="ChEBI" id="CHEBI:30616"/>
        <dbReference type="ChEBI" id="CHEBI:456215"/>
        <dbReference type="ChEBI" id="CHEBI:456216"/>
        <dbReference type="EC" id="2.7.4.3"/>
    </reaction>
</comment>
<comment type="pathway">
    <text evidence="1">Purine metabolism; AMP biosynthesis via salvage pathway; AMP from ADP: step 1/1.</text>
</comment>
<comment type="subunit">
    <text evidence="1">Monomer.</text>
</comment>
<comment type="subcellular location">
    <subcellularLocation>
        <location evidence="1">Cytoplasm</location>
    </subcellularLocation>
</comment>
<comment type="domain">
    <text evidence="1">Consists of three domains, a large central CORE domain and two small peripheral domains, NMPbind and LID, which undergo movements during catalysis. The LID domain closes over the site of phosphoryl transfer upon ATP binding. Assembling and dissambling the active center during each catalytic cycle provides an effective means to prevent ATP hydrolysis. Some bacteria have evolved a zinc-coordinating structure that stabilizes the LID domain.</text>
</comment>
<comment type="similarity">
    <text evidence="1">Belongs to the adenylate kinase family.</text>
</comment>
<evidence type="ECO:0000255" key="1">
    <source>
        <dbReference type="HAMAP-Rule" id="MF_00235"/>
    </source>
</evidence>
<keyword id="KW-0067">ATP-binding</keyword>
<keyword id="KW-0963">Cytoplasm</keyword>
<keyword id="KW-0418">Kinase</keyword>
<keyword id="KW-0479">Metal-binding</keyword>
<keyword id="KW-0545">Nucleotide biosynthesis</keyword>
<keyword id="KW-0547">Nucleotide-binding</keyword>
<keyword id="KW-0808">Transferase</keyword>
<keyword id="KW-0862">Zinc</keyword>
<proteinExistence type="inferred from homology"/>
<reference key="1">
    <citation type="journal article" date="2009" name="J. Bacteriol.">
        <title>Complete genome sequence of the extremophilic Bacillus cereus strain Q1 with industrial applications.</title>
        <authorList>
            <person name="Xiong Z."/>
            <person name="Jiang Y."/>
            <person name="Qi D."/>
            <person name="Lu H."/>
            <person name="Yang F."/>
            <person name="Yang J."/>
            <person name="Chen L."/>
            <person name="Sun L."/>
            <person name="Xu X."/>
            <person name="Xue Y."/>
            <person name="Zhu Y."/>
            <person name="Jin Q."/>
        </authorList>
    </citation>
    <scope>NUCLEOTIDE SEQUENCE [LARGE SCALE GENOMIC DNA]</scope>
    <source>
        <strain>Q1</strain>
    </source>
</reference>
<sequence>MNLILMGLPGAGKGTQAEQIVAKYNIPHISTGDMFRAAMKAETEMGLQAKSFIDKGALVPDEVTIGIVRERLSQEDCVRGFLLDGFPRTVAQASALEEIMKDLGKKIDYVLNINVDSGLLLKRLTGRRICKECGATYHLEFNPPAKADVCDKCGGELYQRSDDNEETVANRLDVNIKQTKPLLDFYEELGYLQSINGEQDINKVFADIDVLIGGLA</sequence>